<sequence>MLSLRPNCECCDRDLPPDSGDAMICTFECTFCAGCAETKLGGTCPNCGGELVRRPVRPASMLKKYPASTARVLKPQGCAPERAA</sequence>
<accession>P42878</accession>
<feature type="chain" id="PRO_0000160643" description="Uncharacterized protein R02474">
    <location>
        <begin position="1"/>
        <end position="84"/>
    </location>
</feature>
<feature type="region of interest" description="Cysteine motif">
    <location>
        <begin position="8"/>
        <end position="47"/>
    </location>
</feature>
<proteinExistence type="predicted"/>
<keyword id="KW-1185">Reference proteome</keyword>
<comment type="domain">
    <text>The cysteine motif may be involved in metal binding.</text>
</comment>
<protein>
    <recommendedName>
        <fullName>Uncharacterized protein R02474</fullName>
    </recommendedName>
</protein>
<reference key="1">
    <citation type="journal article" date="1994" name="Mol. Gen. Genet.">
        <title>A 4.6 kb DNA region of Rhizobium meliloti involved in determining urease and hydrogenase activities carries the structural genes for urease (ureA, ureB, ureC) interrupted by other open reading frames.</title>
        <authorList>
            <person name="Miksch G."/>
            <person name="Arnold W."/>
            <person name="Lentzsch P."/>
            <person name="Priefer U.B."/>
            <person name="Puehler A."/>
        </authorList>
    </citation>
    <scope>NUCLEOTIDE SEQUENCE [GENOMIC DNA]</scope>
    <source>
        <strain>AK631</strain>
    </source>
</reference>
<reference key="2">
    <citation type="journal article" date="2001" name="Proc. Natl. Acad. Sci. U.S.A.">
        <title>Analysis of the chromosome sequence of the legume symbiont Sinorhizobium meliloti strain 1021.</title>
        <authorList>
            <person name="Capela D."/>
            <person name="Barloy-Hubler F."/>
            <person name="Gouzy J."/>
            <person name="Bothe G."/>
            <person name="Ampe F."/>
            <person name="Batut J."/>
            <person name="Boistard P."/>
            <person name="Becker A."/>
            <person name="Boutry M."/>
            <person name="Cadieu E."/>
            <person name="Dreano S."/>
            <person name="Gloux S."/>
            <person name="Godrie T."/>
            <person name="Goffeau A."/>
            <person name="Kahn D."/>
            <person name="Kiss E."/>
            <person name="Lelaure V."/>
            <person name="Masuy D."/>
            <person name="Pohl T."/>
            <person name="Portetelle D."/>
            <person name="Puehler A."/>
            <person name="Purnelle B."/>
            <person name="Ramsperger U."/>
            <person name="Renard C."/>
            <person name="Thebault P."/>
            <person name="Vandenbol M."/>
            <person name="Weidner S."/>
            <person name="Galibert F."/>
        </authorList>
    </citation>
    <scope>NUCLEOTIDE SEQUENCE [LARGE SCALE GENOMIC DNA]</scope>
    <source>
        <strain>1021</strain>
    </source>
</reference>
<reference key="3">
    <citation type="journal article" date="2001" name="Science">
        <title>The composite genome of the legume symbiont Sinorhizobium meliloti.</title>
        <authorList>
            <person name="Galibert F."/>
            <person name="Finan T.M."/>
            <person name="Long S.R."/>
            <person name="Puehler A."/>
            <person name="Abola P."/>
            <person name="Ampe F."/>
            <person name="Barloy-Hubler F."/>
            <person name="Barnett M.J."/>
            <person name="Becker A."/>
            <person name="Boistard P."/>
            <person name="Bothe G."/>
            <person name="Boutry M."/>
            <person name="Bowser L."/>
            <person name="Buhrmester J."/>
            <person name="Cadieu E."/>
            <person name="Capela D."/>
            <person name="Chain P."/>
            <person name="Cowie A."/>
            <person name="Davis R.W."/>
            <person name="Dreano S."/>
            <person name="Federspiel N.A."/>
            <person name="Fisher R.F."/>
            <person name="Gloux S."/>
            <person name="Godrie T."/>
            <person name="Goffeau A."/>
            <person name="Golding B."/>
            <person name="Gouzy J."/>
            <person name="Gurjal M."/>
            <person name="Hernandez-Lucas I."/>
            <person name="Hong A."/>
            <person name="Huizar L."/>
            <person name="Hyman R.W."/>
            <person name="Jones T."/>
            <person name="Kahn D."/>
            <person name="Kahn M.L."/>
            <person name="Kalman S."/>
            <person name="Keating D.H."/>
            <person name="Kiss E."/>
            <person name="Komp C."/>
            <person name="Lelaure V."/>
            <person name="Masuy D."/>
            <person name="Palm C."/>
            <person name="Peck M.C."/>
            <person name="Pohl T.M."/>
            <person name="Portetelle D."/>
            <person name="Purnelle B."/>
            <person name="Ramsperger U."/>
            <person name="Surzycki R."/>
            <person name="Thebault P."/>
            <person name="Vandenbol M."/>
            <person name="Vorhoelter F.J."/>
            <person name="Weidner S."/>
            <person name="Wells D.H."/>
            <person name="Wong K."/>
            <person name="Yeh K.-C."/>
            <person name="Batut J."/>
        </authorList>
    </citation>
    <scope>NUCLEOTIDE SEQUENCE [LARGE SCALE GENOMIC DNA]</scope>
    <source>
        <strain>1021</strain>
    </source>
</reference>
<dbReference type="EMBL" id="S69145">
    <property type="protein sequence ID" value="AAB30135.1"/>
    <property type="molecule type" value="Genomic_DNA"/>
</dbReference>
<dbReference type="EMBL" id="AL591688">
    <property type="protein sequence ID" value="CAC47053.1"/>
    <property type="molecule type" value="Genomic_DNA"/>
</dbReference>
<dbReference type="PIR" id="S42603">
    <property type="entry name" value="S42603"/>
</dbReference>
<dbReference type="RefSeq" id="NP_386580.1">
    <property type="nucleotide sequence ID" value="NC_003047.1"/>
</dbReference>
<dbReference type="RefSeq" id="WP_010969964.1">
    <property type="nucleotide sequence ID" value="NC_003047.1"/>
</dbReference>
<dbReference type="SMR" id="P42878"/>
<dbReference type="EnsemblBacteria" id="CAC47053">
    <property type="protein sequence ID" value="CAC47053"/>
    <property type="gene ID" value="SMc01940"/>
</dbReference>
<dbReference type="KEGG" id="sme:SMc01940"/>
<dbReference type="PATRIC" id="fig|266834.11.peg.3963"/>
<dbReference type="eggNOG" id="COG3813">
    <property type="taxonomic scope" value="Bacteria"/>
</dbReference>
<dbReference type="HOGENOM" id="CLU_179050_0_1_5"/>
<dbReference type="OrthoDB" id="9808883at2"/>
<dbReference type="Proteomes" id="UP000001976">
    <property type="component" value="Chromosome"/>
</dbReference>
<dbReference type="InterPro" id="IPR010696">
    <property type="entry name" value="DUF1272"/>
</dbReference>
<dbReference type="Pfam" id="PF06906">
    <property type="entry name" value="DUF1272"/>
    <property type="match status" value="1"/>
</dbReference>
<name>Y2474_RHIME</name>
<organism>
    <name type="scientific">Rhizobium meliloti (strain 1021)</name>
    <name type="common">Ensifer meliloti</name>
    <name type="synonym">Sinorhizobium meliloti</name>
    <dbReference type="NCBI Taxonomy" id="266834"/>
    <lineage>
        <taxon>Bacteria</taxon>
        <taxon>Pseudomonadati</taxon>
        <taxon>Pseudomonadota</taxon>
        <taxon>Alphaproteobacteria</taxon>
        <taxon>Hyphomicrobiales</taxon>
        <taxon>Rhizobiaceae</taxon>
        <taxon>Sinorhizobium/Ensifer group</taxon>
        <taxon>Sinorhizobium</taxon>
    </lineage>
</organism>
<gene>
    <name type="ordered locus">R02474</name>
    <name type="ORF">SMc01940</name>
</gene>